<feature type="chain" id="PRO_1000190788" description="Lipoprotein signal peptidase">
    <location>
        <begin position="1"/>
        <end position="152"/>
    </location>
</feature>
<feature type="transmembrane region" description="Helical" evidence="1">
    <location>
        <begin position="55"/>
        <end position="75"/>
    </location>
</feature>
<feature type="transmembrane region" description="Helical" evidence="1">
    <location>
        <begin position="85"/>
        <end position="105"/>
    </location>
</feature>
<feature type="transmembrane region" description="Helical" evidence="1">
    <location>
        <begin position="124"/>
        <end position="144"/>
    </location>
</feature>
<feature type="active site" evidence="1">
    <location>
        <position position="111"/>
    </location>
</feature>
<feature type="active site" evidence="1">
    <location>
        <position position="129"/>
    </location>
</feature>
<reference key="1">
    <citation type="submission" date="2008-10" db="EMBL/GenBank/DDBJ databases">
        <title>Genome sequence of Bacillus cereus AH187.</title>
        <authorList>
            <person name="Dodson R.J."/>
            <person name="Durkin A.S."/>
            <person name="Rosovitz M.J."/>
            <person name="Rasko D.A."/>
            <person name="Kolsto A.B."/>
            <person name="Okstad O.A."/>
            <person name="Ravel J."/>
            <person name="Sutton G."/>
        </authorList>
    </citation>
    <scope>NUCLEOTIDE SEQUENCE [LARGE SCALE GENOMIC DNA]</scope>
    <source>
        <strain>AH187</strain>
    </source>
</reference>
<keyword id="KW-0064">Aspartyl protease</keyword>
<keyword id="KW-1003">Cell membrane</keyword>
<keyword id="KW-0378">Hydrolase</keyword>
<keyword id="KW-0472">Membrane</keyword>
<keyword id="KW-0645">Protease</keyword>
<keyword id="KW-0812">Transmembrane</keyword>
<keyword id="KW-1133">Transmembrane helix</keyword>
<name>LSPA_BACC7</name>
<organism>
    <name type="scientific">Bacillus cereus (strain AH187)</name>
    <dbReference type="NCBI Taxonomy" id="405534"/>
    <lineage>
        <taxon>Bacteria</taxon>
        <taxon>Bacillati</taxon>
        <taxon>Bacillota</taxon>
        <taxon>Bacilli</taxon>
        <taxon>Bacillales</taxon>
        <taxon>Bacillaceae</taxon>
        <taxon>Bacillus</taxon>
        <taxon>Bacillus cereus group</taxon>
    </lineage>
</organism>
<accession>B7HLM7</accession>
<protein>
    <recommendedName>
        <fullName evidence="1">Lipoprotein signal peptidase</fullName>
        <ecNumber evidence="1">3.4.23.36</ecNumber>
    </recommendedName>
    <alternativeName>
        <fullName evidence="1">Prolipoprotein signal peptidase</fullName>
    </alternativeName>
    <alternativeName>
        <fullName evidence="1">Signal peptidase II</fullName>
        <shortName evidence="1">SPase II</shortName>
    </alternativeName>
</protein>
<comment type="function">
    <text evidence="1">This protein specifically catalyzes the removal of signal peptides from prolipoproteins.</text>
</comment>
<comment type="catalytic activity">
    <reaction evidence="1">
        <text>Release of signal peptides from bacterial membrane prolipoproteins. Hydrolyzes -Xaa-Yaa-Zaa-|-(S,diacylglyceryl)Cys-, in which Xaa is hydrophobic (preferably Leu), and Yaa (Ala or Ser) and Zaa (Gly or Ala) have small, neutral side chains.</text>
        <dbReference type="EC" id="3.4.23.36"/>
    </reaction>
</comment>
<comment type="pathway">
    <text evidence="1">Protein modification; lipoprotein biosynthesis (signal peptide cleavage).</text>
</comment>
<comment type="subcellular location">
    <subcellularLocation>
        <location evidence="1">Cell membrane</location>
        <topology evidence="1">Multi-pass membrane protein</topology>
    </subcellularLocation>
</comment>
<comment type="similarity">
    <text evidence="1">Belongs to the peptidase A8 family.</text>
</comment>
<gene>
    <name evidence="1" type="primary">lspA</name>
    <name type="ordered locus">BCAH187_A3945</name>
</gene>
<dbReference type="EC" id="3.4.23.36" evidence="1"/>
<dbReference type="EMBL" id="CP001177">
    <property type="protein sequence ID" value="ACJ78047.1"/>
    <property type="molecule type" value="Genomic_DNA"/>
</dbReference>
<dbReference type="SMR" id="B7HLM7"/>
<dbReference type="KEGG" id="bcr:BCAH187_A3945"/>
<dbReference type="HOGENOM" id="CLU_083252_3_0_9"/>
<dbReference type="UniPathway" id="UPA00665"/>
<dbReference type="Proteomes" id="UP000002214">
    <property type="component" value="Chromosome"/>
</dbReference>
<dbReference type="GO" id="GO:0005886">
    <property type="term" value="C:plasma membrane"/>
    <property type="evidence" value="ECO:0007669"/>
    <property type="project" value="UniProtKB-SubCell"/>
</dbReference>
<dbReference type="GO" id="GO:0004190">
    <property type="term" value="F:aspartic-type endopeptidase activity"/>
    <property type="evidence" value="ECO:0007669"/>
    <property type="project" value="UniProtKB-UniRule"/>
</dbReference>
<dbReference type="GO" id="GO:0006508">
    <property type="term" value="P:proteolysis"/>
    <property type="evidence" value="ECO:0007669"/>
    <property type="project" value="UniProtKB-KW"/>
</dbReference>
<dbReference type="HAMAP" id="MF_00161">
    <property type="entry name" value="LspA"/>
    <property type="match status" value="1"/>
</dbReference>
<dbReference type="InterPro" id="IPR001872">
    <property type="entry name" value="Peptidase_A8"/>
</dbReference>
<dbReference type="NCBIfam" id="TIGR00077">
    <property type="entry name" value="lspA"/>
    <property type="match status" value="1"/>
</dbReference>
<dbReference type="PANTHER" id="PTHR33695">
    <property type="entry name" value="LIPOPROTEIN SIGNAL PEPTIDASE"/>
    <property type="match status" value="1"/>
</dbReference>
<dbReference type="PANTHER" id="PTHR33695:SF1">
    <property type="entry name" value="LIPOPROTEIN SIGNAL PEPTIDASE"/>
    <property type="match status" value="1"/>
</dbReference>
<dbReference type="Pfam" id="PF01252">
    <property type="entry name" value="Peptidase_A8"/>
    <property type="match status" value="1"/>
</dbReference>
<dbReference type="PRINTS" id="PR00781">
    <property type="entry name" value="LIPOSIGPTASE"/>
</dbReference>
<dbReference type="PROSITE" id="PS00855">
    <property type="entry name" value="SPASE_II"/>
    <property type="match status" value="1"/>
</dbReference>
<evidence type="ECO:0000255" key="1">
    <source>
        <dbReference type="HAMAP-Rule" id="MF_00161"/>
    </source>
</evidence>
<proteinExistence type="inferred from homology"/>
<sequence length="152" mass="17426">MIYYVIALFVIAIDQISKWLIVKNMELGTSIPIIDNVLYITSHRNRGAAWGILENKMWFFYIITVVFVAFIVFYMKKYAKTDKLLGISLGLILGGAIGNFIDRVFRQEVVDFIHVYIFSYNYPVFNIADSALCIGVVLIIIQTLLEGKKTKE</sequence>